<gene>
    <name evidence="1" type="primary">matP</name>
    <name type="ordered locus">Ent638_1468</name>
</gene>
<reference key="1">
    <citation type="journal article" date="2010" name="PLoS Genet.">
        <title>Genome sequence of the plant growth promoting endophytic bacterium Enterobacter sp. 638.</title>
        <authorList>
            <person name="Taghavi S."/>
            <person name="van der Lelie D."/>
            <person name="Hoffman A."/>
            <person name="Zhang Y.B."/>
            <person name="Walla M.D."/>
            <person name="Vangronsveld J."/>
            <person name="Newman L."/>
            <person name="Monchy S."/>
        </authorList>
    </citation>
    <scope>NUCLEOTIDE SEQUENCE [LARGE SCALE GENOMIC DNA]</scope>
    <source>
        <strain>638</strain>
    </source>
</reference>
<protein>
    <recommendedName>
        <fullName evidence="1">Macrodomain Ter protein</fullName>
    </recommendedName>
</protein>
<feature type="chain" id="PRO_1000064628" description="Macrodomain Ter protein">
    <location>
        <begin position="1"/>
        <end position="151"/>
    </location>
</feature>
<evidence type="ECO:0000255" key="1">
    <source>
        <dbReference type="HAMAP-Rule" id="MF_01073"/>
    </source>
</evidence>
<proteinExistence type="inferred from homology"/>
<organism>
    <name type="scientific">Enterobacter sp. (strain 638)</name>
    <dbReference type="NCBI Taxonomy" id="399742"/>
    <lineage>
        <taxon>Bacteria</taxon>
        <taxon>Pseudomonadati</taxon>
        <taxon>Pseudomonadota</taxon>
        <taxon>Gammaproteobacteria</taxon>
        <taxon>Enterobacterales</taxon>
        <taxon>Enterobacteriaceae</taxon>
        <taxon>Enterobacter</taxon>
    </lineage>
</organism>
<keyword id="KW-0131">Cell cycle</keyword>
<keyword id="KW-0132">Cell division</keyword>
<keyword id="KW-0963">Cytoplasm</keyword>
<keyword id="KW-0238">DNA-binding</keyword>
<sequence length="151" mass="17848">MKYQQLENLESGWKWKYLVKKHREGELITCYIEASAAKEAVDLLLTLENEPVHVNSWIEKHINPALLNRMKQTIRARRKRHFNAEHQHTRKKSIDLEFMVWQRLAGLAQRRGKTLSETVVQLIEDAEHKEKYANQMSTLKNDLQAMLGKKE</sequence>
<accession>A4W8W8</accession>
<dbReference type="EMBL" id="CP000653">
    <property type="protein sequence ID" value="ABP60148.1"/>
    <property type="molecule type" value="Genomic_DNA"/>
</dbReference>
<dbReference type="RefSeq" id="WP_012016865.1">
    <property type="nucleotide sequence ID" value="NC_009436.1"/>
</dbReference>
<dbReference type="SMR" id="A4W8W8"/>
<dbReference type="STRING" id="399742.Ent638_1468"/>
<dbReference type="KEGG" id="ent:Ent638_1468"/>
<dbReference type="eggNOG" id="COG3120">
    <property type="taxonomic scope" value="Bacteria"/>
</dbReference>
<dbReference type="HOGENOM" id="CLU_142157_0_0_6"/>
<dbReference type="OrthoDB" id="5814691at2"/>
<dbReference type="Proteomes" id="UP000000230">
    <property type="component" value="Chromosome"/>
</dbReference>
<dbReference type="GO" id="GO:0005737">
    <property type="term" value="C:cytoplasm"/>
    <property type="evidence" value="ECO:0007669"/>
    <property type="project" value="UniProtKB-SubCell"/>
</dbReference>
<dbReference type="GO" id="GO:0043565">
    <property type="term" value="F:sequence-specific DNA binding"/>
    <property type="evidence" value="ECO:0007669"/>
    <property type="project" value="UniProtKB-UniRule"/>
</dbReference>
<dbReference type="GO" id="GO:0051301">
    <property type="term" value="P:cell division"/>
    <property type="evidence" value="ECO:0007669"/>
    <property type="project" value="UniProtKB-UniRule"/>
</dbReference>
<dbReference type="GO" id="GO:0006355">
    <property type="term" value="P:regulation of DNA-templated transcription"/>
    <property type="evidence" value="ECO:0007669"/>
    <property type="project" value="InterPro"/>
</dbReference>
<dbReference type="Gene3D" id="1.20.1270.380">
    <property type="entry name" value="MatP, N-terminal domain"/>
    <property type="match status" value="1"/>
</dbReference>
<dbReference type="Gene3D" id="1.10.1220.10">
    <property type="entry name" value="Met repressor-like"/>
    <property type="match status" value="1"/>
</dbReference>
<dbReference type="HAMAP" id="MF_01073">
    <property type="entry name" value="MatP"/>
    <property type="match status" value="1"/>
</dbReference>
<dbReference type="InterPro" id="IPR013321">
    <property type="entry name" value="Arc_rbn_hlx_hlx"/>
</dbReference>
<dbReference type="InterPro" id="IPR009390">
    <property type="entry name" value="MatP"/>
</dbReference>
<dbReference type="InterPro" id="IPR035375">
    <property type="entry name" value="MatP_C"/>
</dbReference>
<dbReference type="InterPro" id="IPR035087">
    <property type="entry name" value="MatP_N"/>
</dbReference>
<dbReference type="InterPro" id="IPR038339">
    <property type="entry name" value="MatP_N_sf"/>
</dbReference>
<dbReference type="NCBIfam" id="NF003471">
    <property type="entry name" value="PRK05097.1"/>
    <property type="match status" value="1"/>
</dbReference>
<dbReference type="Pfam" id="PF06303">
    <property type="entry name" value="MatP"/>
    <property type="match status" value="1"/>
</dbReference>
<dbReference type="Pfam" id="PF17414">
    <property type="entry name" value="MatP_C"/>
    <property type="match status" value="1"/>
</dbReference>
<comment type="function">
    <text evidence="1">Required for spatial organization of the terminus region of the chromosome (Ter macrodomain) during the cell cycle. Prevents early segregation of duplicated Ter macrodomains during cell division. Binds specifically to matS, which is a 13 bp signature motif repeated within the Ter macrodomain.</text>
</comment>
<comment type="subunit">
    <text evidence="1">Homodimer.</text>
</comment>
<comment type="subcellular location">
    <subcellularLocation>
        <location evidence="1">Cytoplasm</location>
    </subcellularLocation>
</comment>
<comment type="similarity">
    <text evidence="1">Belongs to the MatP family.</text>
</comment>
<name>MATP_ENT38</name>